<organism>
    <name type="scientific">Shewanella sp. (strain MR-7)</name>
    <dbReference type="NCBI Taxonomy" id="60481"/>
    <lineage>
        <taxon>Bacteria</taxon>
        <taxon>Pseudomonadati</taxon>
        <taxon>Pseudomonadota</taxon>
        <taxon>Gammaproteobacteria</taxon>
        <taxon>Alteromonadales</taxon>
        <taxon>Shewanellaceae</taxon>
        <taxon>Shewanella</taxon>
    </lineage>
</organism>
<proteinExistence type="inferred from homology"/>
<evidence type="ECO:0000255" key="1">
    <source>
        <dbReference type="HAMAP-Rule" id="MF_00344"/>
    </source>
</evidence>
<feature type="chain" id="PRO_1000120411" description="GMP synthase [glutamine-hydrolyzing]">
    <location>
        <begin position="1"/>
        <end position="525"/>
    </location>
</feature>
<feature type="domain" description="Glutamine amidotransferase type-1" evidence="1">
    <location>
        <begin position="8"/>
        <end position="207"/>
    </location>
</feature>
<feature type="domain" description="GMPS ATP-PPase" evidence="1">
    <location>
        <begin position="208"/>
        <end position="400"/>
    </location>
</feature>
<feature type="active site" description="Nucleophile" evidence="1">
    <location>
        <position position="85"/>
    </location>
</feature>
<feature type="active site" evidence="1">
    <location>
        <position position="181"/>
    </location>
</feature>
<feature type="active site" evidence="1">
    <location>
        <position position="183"/>
    </location>
</feature>
<feature type="binding site" evidence="1">
    <location>
        <begin position="235"/>
        <end position="241"/>
    </location>
    <ligand>
        <name>ATP</name>
        <dbReference type="ChEBI" id="CHEBI:30616"/>
    </ligand>
</feature>
<sequence length="525" mass="58254">MSDIHEHKILILDFGSQYTQLIARRIREIGVYCELWAWDVTEAQIREFAPNGIILAGGPESVTADNSPRAPEYVFNAGVPVLGICYGMQTMSEQLGGKVIQGVGEGEFGYAQIEMLAQSALFKDIEDAVNSDGKSLLDVWMSHGDKVSAIPEGFVAVAKTDTCPFAAMSCEEKRFYGVQFHPEVTHTRQGMRMLSHFALDICGCAANWKPSSIIEDAIERLKKQVGDDEVILGLSGGVDSSVVAMLLHRAIGKKLTCVFVDNGLLRLNEAKQVMEMFGDHFGLNIVHIDAENRFLDALKGEADPEAKRKIIGRVFVEIFDEEAKKCVNAKWLAQGTIYPDVIESAGSATGKAHVIKSHHNVGGLPDDMELGLVEPLRELFKDEVRKIGLELGLPYNMLYRHPFPGPGLGVRVLGEVKKEYCDLLRRADAIFIEELHKADLYNKVSQAFTVFLPVRSVGVMGDGRKYDWVVSLRAVETIDFMTAHWAHLPYDFLGRVSNRIINEIDGISRVVYDISGKPPATIEWE</sequence>
<name>GUAA_SHESR</name>
<dbReference type="EC" id="6.3.5.2" evidence="1"/>
<dbReference type="EMBL" id="CP000444">
    <property type="protein sequence ID" value="ABI42305.1"/>
    <property type="molecule type" value="Genomic_DNA"/>
</dbReference>
<dbReference type="SMR" id="Q0HX50"/>
<dbReference type="MEROPS" id="C26.A07"/>
<dbReference type="KEGG" id="shm:Shewmr7_1306"/>
<dbReference type="HOGENOM" id="CLU_014340_0_5_6"/>
<dbReference type="UniPathway" id="UPA00189">
    <property type="reaction ID" value="UER00296"/>
</dbReference>
<dbReference type="GO" id="GO:0005829">
    <property type="term" value="C:cytosol"/>
    <property type="evidence" value="ECO:0007669"/>
    <property type="project" value="TreeGrafter"/>
</dbReference>
<dbReference type="GO" id="GO:0005524">
    <property type="term" value="F:ATP binding"/>
    <property type="evidence" value="ECO:0007669"/>
    <property type="project" value="UniProtKB-UniRule"/>
</dbReference>
<dbReference type="GO" id="GO:0003921">
    <property type="term" value="F:GMP synthase activity"/>
    <property type="evidence" value="ECO:0007669"/>
    <property type="project" value="InterPro"/>
</dbReference>
<dbReference type="CDD" id="cd01742">
    <property type="entry name" value="GATase1_GMP_Synthase"/>
    <property type="match status" value="1"/>
</dbReference>
<dbReference type="CDD" id="cd01997">
    <property type="entry name" value="GMP_synthase_C"/>
    <property type="match status" value="1"/>
</dbReference>
<dbReference type="FunFam" id="3.30.300.10:FF:000002">
    <property type="entry name" value="GMP synthase [glutamine-hydrolyzing]"/>
    <property type="match status" value="1"/>
</dbReference>
<dbReference type="FunFam" id="3.40.50.620:FF:000001">
    <property type="entry name" value="GMP synthase [glutamine-hydrolyzing]"/>
    <property type="match status" value="1"/>
</dbReference>
<dbReference type="FunFam" id="3.40.50.880:FF:000001">
    <property type="entry name" value="GMP synthase [glutamine-hydrolyzing]"/>
    <property type="match status" value="1"/>
</dbReference>
<dbReference type="Gene3D" id="3.30.300.10">
    <property type="match status" value="1"/>
</dbReference>
<dbReference type="Gene3D" id="3.40.50.880">
    <property type="match status" value="1"/>
</dbReference>
<dbReference type="Gene3D" id="3.40.50.620">
    <property type="entry name" value="HUPs"/>
    <property type="match status" value="1"/>
</dbReference>
<dbReference type="HAMAP" id="MF_00344">
    <property type="entry name" value="GMP_synthase"/>
    <property type="match status" value="1"/>
</dbReference>
<dbReference type="InterPro" id="IPR029062">
    <property type="entry name" value="Class_I_gatase-like"/>
</dbReference>
<dbReference type="InterPro" id="IPR017926">
    <property type="entry name" value="GATASE"/>
</dbReference>
<dbReference type="InterPro" id="IPR001674">
    <property type="entry name" value="GMP_synth_C"/>
</dbReference>
<dbReference type="InterPro" id="IPR004739">
    <property type="entry name" value="GMP_synth_GATase"/>
</dbReference>
<dbReference type="InterPro" id="IPR022955">
    <property type="entry name" value="GMP_synthase"/>
</dbReference>
<dbReference type="InterPro" id="IPR025777">
    <property type="entry name" value="GMPS_ATP_PPase_dom"/>
</dbReference>
<dbReference type="InterPro" id="IPR022310">
    <property type="entry name" value="NAD/GMP_synthase"/>
</dbReference>
<dbReference type="InterPro" id="IPR014729">
    <property type="entry name" value="Rossmann-like_a/b/a_fold"/>
</dbReference>
<dbReference type="NCBIfam" id="TIGR00884">
    <property type="entry name" value="guaA_Cterm"/>
    <property type="match status" value="1"/>
</dbReference>
<dbReference type="NCBIfam" id="TIGR00888">
    <property type="entry name" value="guaA_Nterm"/>
    <property type="match status" value="1"/>
</dbReference>
<dbReference type="NCBIfam" id="NF000848">
    <property type="entry name" value="PRK00074.1"/>
    <property type="match status" value="1"/>
</dbReference>
<dbReference type="PANTHER" id="PTHR11922:SF2">
    <property type="entry name" value="GMP SYNTHASE [GLUTAMINE-HYDROLYZING]"/>
    <property type="match status" value="1"/>
</dbReference>
<dbReference type="PANTHER" id="PTHR11922">
    <property type="entry name" value="GMP SYNTHASE-RELATED"/>
    <property type="match status" value="1"/>
</dbReference>
<dbReference type="Pfam" id="PF00117">
    <property type="entry name" value="GATase"/>
    <property type="match status" value="1"/>
</dbReference>
<dbReference type="Pfam" id="PF00958">
    <property type="entry name" value="GMP_synt_C"/>
    <property type="match status" value="1"/>
</dbReference>
<dbReference type="Pfam" id="PF02540">
    <property type="entry name" value="NAD_synthase"/>
    <property type="match status" value="1"/>
</dbReference>
<dbReference type="PRINTS" id="PR00097">
    <property type="entry name" value="ANTSNTHASEII"/>
</dbReference>
<dbReference type="PRINTS" id="PR00099">
    <property type="entry name" value="CPSGATASE"/>
</dbReference>
<dbReference type="PRINTS" id="PR00096">
    <property type="entry name" value="GATASE"/>
</dbReference>
<dbReference type="SUPFAM" id="SSF52402">
    <property type="entry name" value="Adenine nucleotide alpha hydrolases-like"/>
    <property type="match status" value="1"/>
</dbReference>
<dbReference type="SUPFAM" id="SSF52317">
    <property type="entry name" value="Class I glutamine amidotransferase-like"/>
    <property type="match status" value="1"/>
</dbReference>
<dbReference type="SUPFAM" id="SSF54810">
    <property type="entry name" value="GMP synthetase C-terminal dimerisation domain"/>
    <property type="match status" value="1"/>
</dbReference>
<dbReference type="PROSITE" id="PS51273">
    <property type="entry name" value="GATASE_TYPE_1"/>
    <property type="match status" value="1"/>
</dbReference>
<dbReference type="PROSITE" id="PS51553">
    <property type="entry name" value="GMPS_ATP_PPASE"/>
    <property type="match status" value="1"/>
</dbReference>
<protein>
    <recommendedName>
        <fullName evidence="1">GMP synthase [glutamine-hydrolyzing]</fullName>
        <ecNumber evidence="1">6.3.5.2</ecNumber>
    </recommendedName>
    <alternativeName>
        <fullName evidence="1">GMP synthetase</fullName>
    </alternativeName>
    <alternativeName>
        <fullName evidence="1">Glutamine amidotransferase</fullName>
    </alternativeName>
</protein>
<gene>
    <name evidence="1" type="primary">guaA</name>
    <name type="ordered locus">Shewmr7_1306</name>
</gene>
<accession>Q0HX50</accession>
<reference key="1">
    <citation type="submission" date="2006-08" db="EMBL/GenBank/DDBJ databases">
        <title>Complete sequence of chromosome 1 of Shewanella sp. MR-7.</title>
        <authorList>
            <person name="Copeland A."/>
            <person name="Lucas S."/>
            <person name="Lapidus A."/>
            <person name="Barry K."/>
            <person name="Detter J.C."/>
            <person name="Glavina del Rio T."/>
            <person name="Hammon N."/>
            <person name="Israni S."/>
            <person name="Dalin E."/>
            <person name="Tice H."/>
            <person name="Pitluck S."/>
            <person name="Kiss H."/>
            <person name="Brettin T."/>
            <person name="Bruce D."/>
            <person name="Han C."/>
            <person name="Tapia R."/>
            <person name="Gilna P."/>
            <person name="Schmutz J."/>
            <person name="Larimer F."/>
            <person name="Land M."/>
            <person name="Hauser L."/>
            <person name="Kyrpides N."/>
            <person name="Mikhailova N."/>
            <person name="Nealson K."/>
            <person name="Konstantinidis K."/>
            <person name="Klappenbach J."/>
            <person name="Tiedje J."/>
            <person name="Richardson P."/>
        </authorList>
    </citation>
    <scope>NUCLEOTIDE SEQUENCE [LARGE SCALE GENOMIC DNA]</scope>
    <source>
        <strain>MR-7</strain>
    </source>
</reference>
<keyword id="KW-0067">ATP-binding</keyword>
<keyword id="KW-0315">Glutamine amidotransferase</keyword>
<keyword id="KW-0332">GMP biosynthesis</keyword>
<keyword id="KW-0436">Ligase</keyword>
<keyword id="KW-0547">Nucleotide-binding</keyword>
<keyword id="KW-0658">Purine biosynthesis</keyword>
<comment type="function">
    <text evidence="1">Catalyzes the synthesis of GMP from XMP.</text>
</comment>
<comment type="catalytic activity">
    <reaction evidence="1">
        <text>XMP + L-glutamine + ATP + H2O = GMP + L-glutamate + AMP + diphosphate + 2 H(+)</text>
        <dbReference type="Rhea" id="RHEA:11680"/>
        <dbReference type="ChEBI" id="CHEBI:15377"/>
        <dbReference type="ChEBI" id="CHEBI:15378"/>
        <dbReference type="ChEBI" id="CHEBI:29985"/>
        <dbReference type="ChEBI" id="CHEBI:30616"/>
        <dbReference type="ChEBI" id="CHEBI:33019"/>
        <dbReference type="ChEBI" id="CHEBI:57464"/>
        <dbReference type="ChEBI" id="CHEBI:58115"/>
        <dbReference type="ChEBI" id="CHEBI:58359"/>
        <dbReference type="ChEBI" id="CHEBI:456215"/>
        <dbReference type="EC" id="6.3.5.2"/>
    </reaction>
</comment>
<comment type="pathway">
    <text evidence="1">Purine metabolism; GMP biosynthesis; GMP from XMP (L-Gln route): step 1/1.</text>
</comment>
<comment type="subunit">
    <text evidence="1">Homodimer.</text>
</comment>